<comment type="function">
    <text evidence="2">Probably acts as a spliceosomal factor that contributes to spliceosome assembly and regulates the isoform switching of proteins such as PARP6.</text>
</comment>
<comment type="subcellular location">
    <subcellularLocation>
        <location evidence="2">Nucleus</location>
    </subcellularLocation>
</comment>
<comment type="PTM">
    <text evidence="2">Phosphorylated. Phosphorylation at Ser-109 and Ser-111 mediates the interaction with spliceosome proteins.</text>
</comment>
<comment type="similarity">
    <text evidence="4">Belongs to the RSRP family.</text>
</comment>
<sequence length="311" mass="36490">MSTYVNDMWPGSPQEKDSPSTSRSGGSSRLSSRSRSRSFSRSSRSHSRVSSRFSSRSRCRRSRSRSRSRRRHQRKYRRYSRSYSRSRSRSRNRRYRERRYGFSRRYYRSPSRSRSRSRSRSRGRSYCGRAYAIARGQRYYGFGRTVYPEEHSRWRDRSRTRSRSRTPFRLSEKERMELLEIAKANAAKALGTTSIDLPASLRTVPVAKETSRGIGVSSNGAKPEVSILGLSEQNFQKANCQIMWVCSVLVDKVFIQTIRCLTGTCPSFLKRGIFMRDSTDGPKVMHRWESFVYSCKYCLGYVKMRFFRHSN</sequence>
<name>RSRP1_PONAB</name>
<gene>
    <name type="primary">RSRP1</name>
</gene>
<dbReference type="EMBL" id="CR859914">
    <property type="protein sequence ID" value="CAH92070.1"/>
    <property type="molecule type" value="mRNA"/>
</dbReference>
<dbReference type="STRING" id="9601.ENSPPYP00000011888"/>
<dbReference type="eggNOG" id="ENOG502S6J6">
    <property type="taxonomic scope" value="Eukaryota"/>
</dbReference>
<dbReference type="InParanoid" id="Q5R840"/>
<dbReference type="Proteomes" id="UP000001595">
    <property type="component" value="Unplaced"/>
</dbReference>
<dbReference type="GO" id="GO:0005634">
    <property type="term" value="C:nucleus"/>
    <property type="evidence" value="ECO:0000250"/>
    <property type="project" value="UniProtKB"/>
</dbReference>
<dbReference type="GO" id="GO:0000245">
    <property type="term" value="P:spliceosomal complex assembly"/>
    <property type="evidence" value="ECO:0000250"/>
    <property type="project" value="UniProtKB"/>
</dbReference>
<dbReference type="InterPro" id="IPR029656">
    <property type="entry name" value="RSRP1"/>
</dbReference>
<dbReference type="PANTHER" id="PTHR47622">
    <property type="entry name" value="ARGININE/SERINE-RICH PROTEIN 1"/>
    <property type="match status" value="1"/>
</dbReference>
<dbReference type="PANTHER" id="PTHR47622:SF1">
    <property type="entry name" value="ARGININE_SERINE-RICH PROTEIN 1"/>
    <property type="match status" value="1"/>
</dbReference>
<dbReference type="Pfam" id="PF17069">
    <property type="entry name" value="RSRP"/>
    <property type="match status" value="1"/>
</dbReference>
<feature type="chain" id="PRO_0000297620" description="Arginine/serine-rich protein 1">
    <location>
        <begin position="1"/>
        <end position="311"/>
    </location>
</feature>
<feature type="region of interest" description="Disordered" evidence="3">
    <location>
        <begin position="1"/>
        <end position="125"/>
    </location>
</feature>
<feature type="compositionally biased region" description="Low complexity" evidence="3">
    <location>
        <begin position="20"/>
        <end position="31"/>
    </location>
</feature>
<feature type="compositionally biased region" description="Basic residues" evidence="3">
    <location>
        <begin position="32"/>
        <end position="123"/>
    </location>
</feature>
<feature type="modified residue" description="Phosphoserine" evidence="1">
    <location>
        <position position="12"/>
    </location>
</feature>
<feature type="modified residue" description="Phosphoserine" evidence="2">
    <location>
        <position position="109"/>
    </location>
</feature>
<feature type="modified residue" description="Phosphoserine" evidence="2">
    <location>
        <position position="111"/>
    </location>
</feature>
<feature type="modified residue" description="Omega-N-methylarginine" evidence="1">
    <location>
        <position position="135"/>
    </location>
</feature>
<reference key="1">
    <citation type="submission" date="2004-11" db="EMBL/GenBank/DDBJ databases">
        <authorList>
            <consortium name="The German cDNA consortium"/>
        </authorList>
    </citation>
    <scope>NUCLEOTIDE SEQUENCE [LARGE SCALE MRNA]</scope>
    <source>
        <tissue>Kidney</tissue>
    </source>
</reference>
<protein>
    <recommendedName>
        <fullName>Arginine/serine-rich protein 1</fullName>
    </recommendedName>
</protein>
<proteinExistence type="evidence at transcript level"/>
<accession>Q5R840</accession>
<organism>
    <name type="scientific">Pongo abelii</name>
    <name type="common">Sumatran orangutan</name>
    <name type="synonym">Pongo pygmaeus abelii</name>
    <dbReference type="NCBI Taxonomy" id="9601"/>
    <lineage>
        <taxon>Eukaryota</taxon>
        <taxon>Metazoa</taxon>
        <taxon>Chordata</taxon>
        <taxon>Craniata</taxon>
        <taxon>Vertebrata</taxon>
        <taxon>Euteleostomi</taxon>
        <taxon>Mammalia</taxon>
        <taxon>Eutheria</taxon>
        <taxon>Euarchontoglires</taxon>
        <taxon>Primates</taxon>
        <taxon>Haplorrhini</taxon>
        <taxon>Catarrhini</taxon>
        <taxon>Hominidae</taxon>
        <taxon>Pongo</taxon>
    </lineage>
</organism>
<evidence type="ECO:0000250" key="1">
    <source>
        <dbReference type="UniProtKB" id="Q3UC65"/>
    </source>
</evidence>
<evidence type="ECO:0000250" key="2">
    <source>
        <dbReference type="UniProtKB" id="Q9BUV0"/>
    </source>
</evidence>
<evidence type="ECO:0000256" key="3">
    <source>
        <dbReference type="SAM" id="MobiDB-lite"/>
    </source>
</evidence>
<evidence type="ECO:0000305" key="4"/>
<keyword id="KW-0488">Methylation</keyword>
<keyword id="KW-0539">Nucleus</keyword>
<keyword id="KW-0597">Phosphoprotein</keyword>
<keyword id="KW-1185">Reference proteome</keyword>